<geneLocation type="chloroplast"/>
<organism>
    <name type="scientific">Triticum aestivum</name>
    <name type="common">Wheat</name>
    <dbReference type="NCBI Taxonomy" id="4565"/>
    <lineage>
        <taxon>Eukaryota</taxon>
        <taxon>Viridiplantae</taxon>
        <taxon>Streptophyta</taxon>
        <taxon>Embryophyta</taxon>
        <taxon>Tracheophyta</taxon>
        <taxon>Spermatophyta</taxon>
        <taxon>Magnoliopsida</taxon>
        <taxon>Liliopsida</taxon>
        <taxon>Poales</taxon>
        <taxon>Poaceae</taxon>
        <taxon>BOP clade</taxon>
        <taxon>Pooideae</taxon>
        <taxon>Triticodae</taxon>
        <taxon>Triticeae</taxon>
        <taxon>Triticinae</taxon>
        <taxon>Triticum</taxon>
    </lineage>
</organism>
<reference key="1">
    <citation type="journal article" date="1987" name="Nucleic Acids Res.">
        <title>Nucleotide sequence of the gene for ribosomal protein S2 in wheat chloroplast DNA.</title>
        <authorList>
            <person name="Hoeglund A.-S."/>
            <person name="Gray J.C."/>
        </authorList>
    </citation>
    <scope>NUCLEOTIDE SEQUENCE [GENOMIC DNA]</scope>
    <source>
        <strain>cv. Mardler</strain>
    </source>
</reference>
<reference key="2">
    <citation type="submission" date="1999-05" db="EMBL/GenBank/DDBJ databases">
        <title>Molecular analysis of a 21.1-kb fragment of wheat chloroplast DNA bearing RNA polymerase subunit (rpo) genes.</title>
        <authorList>
            <person name="Matsuoka Y."/>
            <person name="Tsunewaki K."/>
            <person name="Ohnishi Y."/>
        </authorList>
    </citation>
    <scope>NUCLEOTIDE SEQUENCE [GENOMIC DNA]</scope>
    <source>
        <strain>cv. Chinese Spring</strain>
    </source>
</reference>
<reference key="3">
    <citation type="journal article" date="2000" name="Plant Mol. Biol. Rep.">
        <title>Chinese spring wheat (Triticum aestivum L.) chloroplast genome: complete sequence and contig clones.</title>
        <authorList>
            <person name="Ogihara Y."/>
            <person name="Isono K."/>
            <person name="Kojima T."/>
            <person name="Endo A."/>
            <person name="Hanaoka M."/>
            <person name="Shiina T."/>
            <person name="Terachi T."/>
            <person name="Utsugi S."/>
            <person name="Murata M."/>
            <person name="Mori N."/>
            <person name="Takumi S."/>
            <person name="Ikeo K."/>
            <person name="Gojobori T."/>
            <person name="Murai R."/>
            <person name="Murai K."/>
            <person name="Matsuoka Y."/>
            <person name="Ohnishi Y."/>
            <person name="Tajiri H."/>
            <person name="Tsunewaki K."/>
        </authorList>
    </citation>
    <scope>NUCLEOTIDE SEQUENCE [LARGE SCALE GENOMIC DNA]</scope>
    <source>
        <strain>cv. Chinese Spring</strain>
    </source>
</reference>
<accession>P17933</accession>
<accession>Q9TNM0</accession>
<feature type="chain" id="PRO_0000134315" description="Small ribosomal subunit protein uS2c">
    <location>
        <begin position="1"/>
        <end position="236"/>
    </location>
</feature>
<feature type="sequence conflict" description="In Ref. 1; AAA84732." evidence="1" ref="1">
    <original>K</original>
    <variation>T</variation>
    <location>
        <position position="69"/>
    </location>
</feature>
<gene>
    <name type="primary">rps2</name>
</gene>
<protein>
    <recommendedName>
        <fullName evidence="1">Small ribosomal subunit protein uS2c</fullName>
    </recommendedName>
    <alternativeName>
        <fullName>30S ribosomal protein S2, chloroplastic</fullName>
    </alternativeName>
</protein>
<sequence length="236" mass="26996">MTRRYWNINLKEMIEAGVHFGHGIKKWNPKMAPYISAKRKGTHIINLARTARFLSEACDLVFDAASQGKSFLIVGTKKRATDLVASAAIRARCHYVNKKWFSGMLTNWSITKTRLSQFRDLRAEEKMGKFHHLPKRDVAILKRKLSTLQRYLGGIKYMTRLPDIVIVLDQQKEYIALRECAILGIPTISLVDTNCDPDLANISIPANDDTMTSIRLILNKLVFSICEGRSLYIRNR</sequence>
<keyword id="KW-0150">Chloroplast</keyword>
<keyword id="KW-0934">Plastid</keyword>
<keyword id="KW-1185">Reference proteome</keyword>
<keyword id="KW-0687">Ribonucleoprotein</keyword>
<keyword id="KW-0689">Ribosomal protein</keyword>
<comment type="subcellular location">
    <subcellularLocation>
        <location>Plastid</location>
        <location>Chloroplast</location>
    </subcellularLocation>
</comment>
<comment type="similarity">
    <text evidence="1">Belongs to the universal ribosomal protein uS2 family.</text>
</comment>
<dbReference type="EMBL" id="M35396">
    <property type="protein sequence ID" value="AAA84732.1"/>
    <property type="molecule type" value="Genomic_DNA"/>
</dbReference>
<dbReference type="EMBL" id="AB027572">
    <property type="protein sequence ID" value="BAA78043.1"/>
    <property type="molecule type" value="Genomic_DNA"/>
</dbReference>
<dbReference type="EMBL" id="AB042240">
    <property type="protein sequence ID" value="BAB47027.1"/>
    <property type="molecule type" value="Genomic_DNA"/>
</dbReference>
<dbReference type="PIR" id="S06322">
    <property type="entry name" value="R3WT2"/>
</dbReference>
<dbReference type="RefSeq" id="NP_114252.1">
    <property type="nucleotide sequence ID" value="NC_002762.1"/>
</dbReference>
<dbReference type="SMR" id="P17933"/>
<dbReference type="STRING" id="4565.P17933"/>
<dbReference type="PaxDb" id="4565-EPlTAEP00000010057"/>
<dbReference type="EnsemblPlants" id="TraesJAG3A03G01359460.1">
    <property type="protein sequence ID" value="TraesJAG3A03G01359460.1.CDS1"/>
    <property type="gene ID" value="TraesJAG3A03G01359460"/>
</dbReference>
<dbReference type="EnsemblPlants" id="TraesJUL3A03G01361960.1">
    <property type="protein sequence ID" value="TraesJUL3A03G01361960.1.CDS1"/>
    <property type="gene ID" value="TraesJUL3A03G01361960"/>
</dbReference>
<dbReference type="EnsemblPlants" id="TraesJUL5D03G03230990.1">
    <property type="protein sequence ID" value="TraesJUL5D03G03230990.1.CDS1"/>
    <property type="gene ID" value="TraesJUL5D03G03230990"/>
</dbReference>
<dbReference type="EnsemblPlants" id="TraesKAR2D01G0456760.1">
    <property type="protein sequence ID" value="cds.TraesKAR2D01G0456760.1"/>
    <property type="gene ID" value="TraesKAR2D01G0456760"/>
</dbReference>
<dbReference type="EnsemblPlants" id="TraesKAR3A01G0068980.1">
    <property type="protein sequence ID" value="cds.TraesKAR3A01G0068980.1"/>
    <property type="gene ID" value="TraesKAR3A01G0068980"/>
</dbReference>
<dbReference type="EnsemblPlants" id="TraesKAR5A01G0338950.1">
    <property type="protein sequence ID" value="cds.TraesKAR5A01G0338950.1"/>
    <property type="gene ID" value="TraesKAR5A01G0338950"/>
</dbReference>
<dbReference type="EnsemblPlants" id="TraesKAR6B01G0219640.1">
    <property type="protein sequence ID" value="cds.TraesKAR6B01G0219640.1"/>
    <property type="gene ID" value="TraesKAR6B01G0219640"/>
</dbReference>
<dbReference type="EnsemblPlants" id="TraesKAR6B01G0220390.1">
    <property type="protein sequence ID" value="cds.TraesKAR6B01G0220390.1"/>
    <property type="gene ID" value="TraesKAR6B01G0220390"/>
</dbReference>
<dbReference type="EnsemblPlants" id="TraesKARUn01G0027100.1">
    <property type="protein sequence ID" value="cds.TraesKARUn01G0027100.1"/>
    <property type="gene ID" value="TraesKARUn01G0027100"/>
</dbReference>
<dbReference type="EnsemblPlants" id="TraesKARUn01G0030480.1">
    <property type="protein sequence ID" value="cds.TraesKARUn01G0030480.1"/>
    <property type="gene ID" value="TraesKARUn01G0030480"/>
</dbReference>
<dbReference type="EnsemblPlants" id="TraesKARUn01G0030640.1">
    <property type="protein sequence ID" value="cds.TraesKARUn01G0030640.1"/>
    <property type="gene ID" value="TraesKARUn01G0030640"/>
</dbReference>
<dbReference type="EnsemblPlants" id="TraesKARUn01G0031460.1">
    <property type="protein sequence ID" value="cds.TraesKARUn01G0031460.1"/>
    <property type="gene ID" value="TraesKARUn01G0031460"/>
</dbReference>
<dbReference type="EnsemblPlants" id="TraesKARUn01G0035150.1">
    <property type="protein sequence ID" value="cds.TraesKARUn01G0035150.1"/>
    <property type="gene ID" value="TraesKARUn01G0035150"/>
</dbReference>
<dbReference type="EnsemblPlants" id="TraesKARUn01G0062720.1">
    <property type="protein sequence ID" value="cds.TraesKARUn01G0062720.1"/>
    <property type="gene ID" value="TraesKARUn01G0062720"/>
</dbReference>
<dbReference type="EnsemblPlants" id="TraesKARUn01G0064460.1">
    <property type="protein sequence ID" value="cds.TraesKARUn01G0064460.1"/>
    <property type="gene ID" value="TraesKARUn01G0064460"/>
</dbReference>
<dbReference type="EnsemblPlants" id="TraesKARUn01G0076450.1">
    <property type="protein sequence ID" value="cds.TraesKARUn01G0076450.1"/>
    <property type="gene ID" value="TraesKARUn01G0076450"/>
</dbReference>
<dbReference type="EnsemblPlants" id="TraesKARUn01G0082660.1">
    <property type="protein sequence ID" value="cds.TraesKARUn01G0082660.1"/>
    <property type="gene ID" value="TraesKARUn01G0082660"/>
</dbReference>
<dbReference type="EnsemblPlants" id="TraesKARUn01G0084700.1">
    <property type="protein sequence ID" value="cds.TraesKARUn01G0084700.1"/>
    <property type="gene ID" value="TraesKARUn01G0084700"/>
</dbReference>
<dbReference type="EnsemblPlants" id="TraesKARUn01G0085720.1">
    <property type="protein sequence ID" value="cds.TraesKARUn01G0085720.1"/>
    <property type="gene ID" value="TraesKARUn01G0085720"/>
</dbReference>
<dbReference type="EnsemblPlants" id="TraesKARUn01G0086130.1">
    <property type="protein sequence ID" value="cds.TraesKARUn01G0086130.1"/>
    <property type="gene ID" value="TraesKARUn01G0086130"/>
</dbReference>
<dbReference type="EnsemblPlants" id="TraesKARUn01G0086980.1">
    <property type="protein sequence ID" value="cds.TraesKARUn01G0086980.1"/>
    <property type="gene ID" value="TraesKARUn01G0086980"/>
</dbReference>
<dbReference type="EnsemblPlants" id="TraesKARUn01G0087640.1">
    <property type="protein sequence ID" value="cds.TraesKARUn01G0087640.1"/>
    <property type="gene ID" value="TraesKARUn01G0087640"/>
</dbReference>
<dbReference type="EnsemblPlants" id="TraesKARUn01G0089300.1">
    <property type="protein sequence ID" value="cds.TraesKARUn01G0089300.1"/>
    <property type="gene ID" value="TraesKARUn01G0089300"/>
</dbReference>
<dbReference type="EnsemblPlants" id="TraesKARUn01G0090330.1">
    <property type="protein sequence ID" value="cds.TraesKARUn01G0090330.1"/>
    <property type="gene ID" value="TraesKARUn01G0090330"/>
</dbReference>
<dbReference type="EnsemblPlants" id="TraesKARUn01G0091460.1">
    <property type="protein sequence ID" value="cds.TraesKARUn01G0091460.1"/>
    <property type="gene ID" value="TraesKARUn01G0091460"/>
</dbReference>
<dbReference type="EnsemblPlants" id="TraesKARUn01G0096620.1">
    <property type="protein sequence ID" value="cds.TraesKARUn01G0096620.1"/>
    <property type="gene ID" value="TraesKARUn01G0096620"/>
</dbReference>
<dbReference type="EnsemblPlants" id="TraesKARUn01G0096700.1">
    <property type="protein sequence ID" value="cds.TraesKARUn01G0096700.1"/>
    <property type="gene ID" value="TraesKARUn01G0096700"/>
</dbReference>
<dbReference type="EnsemblPlants" id="TraesKARUn01G0097890.1">
    <property type="protein sequence ID" value="cds.TraesKARUn01G0097890.1"/>
    <property type="gene ID" value="TraesKARUn01G0097890"/>
</dbReference>
<dbReference type="EnsemblPlants" id="TraesKARUn01G0098550.1">
    <property type="protein sequence ID" value="cds.TraesKARUn01G0098550.1"/>
    <property type="gene ID" value="TraesKARUn01G0098550"/>
</dbReference>
<dbReference type="EnsemblPlants" id="TraesKARUn01G0098810.1">
    <property type="protein sequence ID" value="cds.TraesKARUn01G0098810.1"/>
    <property type="gene ID" value="TraesKARUn01G0098810"/>
</dbReference>
<dbReference type="EnsemblPlants" id="TraesKARUn01G0098860.1">
    <property type="protein sequence ID" value="cds.TraesKARUn01G0098860.1"/>
    <property type="gene ID" value="TraesKARUn01G0098860"/>
</dbReference>
<dbReference type="EnsemblPlants" id="TraesKARUn01G0102530.1">
    <property type="protein sequence ID" value="cds.TraesKARUn01G0102530.1"/>
    <property type="gene ID" value="TraesKARUn01G0102530"/>
</dbReference>
<dbReference type="EnsemblPlants" id="TraesKARUn01G0103940.1">
    <property type="protein sequence ID" value="cds.TraesKARUn01G0103940.1"/>
    <property type="gene ID" value="TraesKARUn01G0103940"/>
</dbReference>
<dbReference type="EnsemblPlants" id="TraesKARUn01G0107480.1">
    <property type="protein sequence ID" value="cds.TraesKARUn01G0107480.1"/>
    <property type="gene ID" value="TraesKARUn01G0107480"/>
</dbReference>
<dbReference type="EnsemblPlants" id="TraesKARUn01G0109270.1">
    <property type="protein sequence ID" value="cds.TraesKARUn01G0109270.1"/>
    <property type="gene ID" value="TraesKARUn01G0109270"/>
</dbReference>
<dbReference type="EnsemblPlants" id="TraesKARUn01G0111230.1">
    <property type="protein sequence ID" value="cds.TraesKARUn01G0111230.1"/>
    <property type="gene ID" value="TraesKARUn01G0111230"/>
</dbReference>
<dbReference type="EnsemblPlants" id="TraesKARUn01G0111690.1">
    <property type="protein sequence ID" value="cds.TraesKARUn01G0111690.1"/>
    <property type="gene ID" value="TraesKARUn01G0111690"/>
</dbReference>
<dbReference type="EnsemblPlants" id="TraesKARUn01G0112600.1">
    <property type="protein sequence ID" value="cds.TraesKARUn01G0112600.1"/>
    <property type="gene ID" value="TraesKARUn01G0112600"/>
</dbReference>
<dbReference type="EnsemblPlants" id="TraesKARUn01G0113860.1">
    <property type="protein sequence ID" value="cds.TraesKARUn01G0113860.1"/>
    <property type="gene ID" value="TraesKARUn01G0113860"/>
</dbReference>
<dbReference type="EnsemblPlants" id="TraesKARUn01G0114420.1">
    <property type="protein sequence ID" value="cds.TraesKARUn01G0114420.1"/>
    <property type="gene ID" value="TraesKARUn01G0114420"/>
</dbReference>
<dbReference type="EnsemblPlants" id="TraesKARUn01G0119930.1">
    <property type="protein sequence ID" value="cds.TraesKARUn01G0119930.1"/>
    <property type="gene ID" value="TraesKARUn01G0119930"/>
</dbReference>
<dbReference type="EnsemblPlants" id="TraesKARUn01G0120650.1">
    <property type="protein sequence ID" value="cds.TraesKARUn01G0120650.1"/>
    <property type="gene ID" value="TraesKARUn01G0120650"/>
</dbReference>
<dbReference type="EnsemblPlants" id="TraesKARUn01G0120860.1">
    <property type="protein sequence ID" value="cds.TraesKARUn01G0120860.1"/>
    <property type="gene ID" value="TraesKARUn01G0120860"/>
</dbReference>
<dbReference type="EnsemblPlants" id="TraesKARUn01G0121760.1">
    <property type="protein sequence ID" value="cds.TraesKARUn01G0121760.1"/>
    <property type="gene ID" value="TraesKARUn01G0121760"/>
</dbReference>
<dbReference type="EnsemblPlants" id="TraesKARUn01G0122870.1">
    <property type="protein sequence ID" value="cds.TraesKARUn01G0122870.1"/>
    <property type="gene ID" value="TraesKARUn01G0122870"/>
</dbReference>
<dbReference type="EnsemblPlants" id="TraesKARUn01G0125550.1">
    <property type="protein sequence ID" value="cds.TraesKARUn01G0125550.1"/>
    <property type="gene ID" value="TraesKARUn01G0125550"/>
</dbReference>
<dbReference type="EnsemblPlants" id="TraesKARUn01G0129780.1">
    <property type="protein sequence ID" value="cds.TraesKARUn01G0129780.1"/>
    <property type="gene ID" value="TraesKARUn01G0129780"/>
</dbReference>
<dbReference type="EnsemblPlants" id="TraesKARUn01G0129960.1">
    <property type="protein sequence ID" value="cds.TraesKARUn01G0129960.1"/>
    <property type="gene ID" value="TraesKARUn01G0129960"/>
</dbReference>
<dbReference type="EnsemblPlants" id="TraesKARUn01G0130160.1">
    <property type="protein sequence ID" value="cds.TraesKARUn01G0130160.1"/>
    <property type="gene ID" value="TraesKARUn01G0130160"/>
</dbReference>
<dbReference type="EnsemblPlants" id="TraesKARUn01G0131590.1">
    <property type="protein sequence ID" value="cds.TraesKARUn01G0131590.1"/>
    <property type="gene ID" value="TraesKARUn01G0131590"/>
</dbReference>
<dbReference type="EnsemblPlants" id="TraesKARUn01G0132330.1">
    <property type="protein sequence ID" value="cds.TraesKARUn01G0132330.1"/>
    <property type="gene ID" value="TraesKARUn01G0132330"/>
</dbReference>
<dbReference type="EnsemblPlants" id="TraesKARUn01G0132550.1">
    <property type="protein sequence ID" value="cds.TraesKARUn01G0132550.1"/>
    <property type="gene ID" value="TraesKARUn01G0132550"/>
</dbReference>
<dbReference type="EnsemblPlants" id="TraesKARUn01G0138220.1">
    <property type="protein sequence ID" value="cds.TraesKARUn01G0138220.1"/>
    <property type="gene ID" value="TraesKARUn01G0138220"/>
</dbReference>
<dbReference type="EnsemblPlants" id="TraesKARUn01G0147990.1">
    <property type="protein sequence ID" value="cds.TraesKARUn01G0147990.1"/>
    <property type="gene ID" value="TraesKARUn01G0147990"/>
</dbReference>
<dbReference type="EnsemblPlants" id="TraesKARUn01G0148090.1">
    <property type="protein sequence ID" value="cds.TraesKARUn01G0148090.1"/>
    <property type="gene ID" value="TraesKARUn01G0148090"/>
</dbReference>
<dbReference type="EnsemblPlants" id="TraesKARUn01G0163370.1">
    <property type="protein sequence ID" value="cds.TraesKARUn01G0163370.1"/>
    <property type="gene ID" value="TraesKARUn01G0163370"/>
</dbReference>
<dbReference type="EnsemblPlants" id="TraesKARUn01G0164730.1">
    <property type="protein sequence ID" value="cds.TraesKARUn01G0164730.1"/>
    <property type="gene ID" value="TraesKARUn01G0164730"/>
</dbReference>
<dbReference type="EnsemblPlants" id="TraesKARUn01G0165130.1">
    <property type="protein sequence ID" value="cds.TraesKARUn01G0165130.1"/>
    <property type="gene ID" value="TraesKARUn01G0165130"/>
</dbReference>
<dbReference type="EnsemblPlants" id="TraesKARUn01G0170850.1">
    <property type="protein sequence ID" value="cds.TraesKARUn01G0170850.1"/>
    <property type="gene ID" value="TraesKARUn01G0170850"/>
</dbReference>
<dbReference type="EnsemblPlants" id="TraesKARUn01G0171190.1">
    <property type="protein sequence ID" value="cds.TraesKARUn01G0171190.1"/>
    <property type="gene ID" value="TraesKARUn01G0171190"/>
</dbReference>
<dbReference type="EnsemblPlants" id="TraesKARUn01G0171540.1">
    <property type="protein sequence ID" value="cds.TraesKARUn01G0171540.1"/>
    <property type="gene ID" value="TraesKARUn01G0171540"/>
</dbReference>
<dbReference type="EnsemblPlants" id="TraesKARUn01G0171990.1">
    <property type="protein sequence ID" value="cds.TraesKARUn01G0171990.1"/>
    <property type="gene ID" value="TraesKARUn01G0171990"/>
</dbReference>
<dbReference type="EnsemblPlants" id="TraesKARUn01G0177320.1">
    <property type="protein sequence ID" value="cds.TraesKARUn01G0177320.1"/>
    <property type="gene ID" value="TraesKARUn01G0177320"/>
</dbReference>
<dbReference type="EnsemblPlants" id="TraesKARUn01G0177550.1">
    <property type="protein sequence ID" value="cds.TraesKARUn01G0177550.1"/>
    <property type="gene ID" value="TraesKARUn01G0177550"/>
</dbReference>
<dbReference type="EnsemblPlants" id="TraesKARUn01G0179280.1">
    <property type="protein sequence ID" value="cds.TraesKARUn01G0179280.1"/>
    <property type="gene ID" value="TraesKARUn01G0179280"/>
</dbReference>
<dbReference type="EnsemblPlants" id="TraesKARUn01G0179400.1">
    <property type="protein sequence ID" value="cds.TraesKARUn01G0179400.1"/>
    <property type="gene ID" value="TraesKARUn01G0179400"/>
</dbReference>
<dbReference type="EnsemblPlants" id="TraesKARUn01G0190130.1">
    <property type="protein sequence ID" value="cds.TraesKARUn01G0190130.1"/>
    <property type="gene ID" value="TraesKARUn01G0190130"/>
</dbReference>
<dbReference type="EnsemblPlants" id="TraesLDM3A03G01352780.1">
    <property type="protein sequence ID" value="TraesLDM3A03G01352780.1.CDS1"/>
    <property type="gene ID" value="TraesLDM3A03G01352780"/>
</dbReference>
<dbReference type="EnsemblPlants" id="TraesPARA_EIv1.0_0757360.1">
    <property type="protein sequence ID" value="TraesPARA_EIv1.0_0757360.1.CDS1"/>
    <property type="gene ID" value="TraesPARA_EIv1.0_0757360"/>
</dbReference>
<dbReference type="EnsemblPlants" id="TraesPARA_EIv1.0_1544800.1">
    <property type="protein sequence ID" value="TraesPARA_EIv1.0_1544800.1.CDS1"/>
    <property type="gene ID" value="TraesPARA_EIv1.0_1544800"/>
</dbReference>
<dbReference type="EnsemblPlants" id="TraesPARA_EIv1.0_2014480.1">
    <property type="protein sequence ID" value="TraesPARA_EIv1.0_2014480.1.CDS1"/>
    <property type="gene ID" value="TraesPARA_EIv1.0_2014480"/>
</dbReference>
<dbReference type="EnsemblPlants" id="TraesPARA_EIv1.0_2646050.1">
    <property type="protein sequence ID" value="TraesPARA_EIv1.0_2646050.1.CDS1"/>
    <property type="gene ID" value="TraesPARA_EIv1.0_2646050"/>
</dbReference>
<dbReference type="EnsemblPlants" id="TraesPARA_EIv1.0_2648350.1">
    <property type="protein sequence ID" value="TraesPARA_EIv1.0_2648350.1.CDS1"/>
    <property type="gene ID" value="TraesPARA_EIv1.0_2648350"/>
</dbReference>
<dbReference type="EnsemblPlants" id="TraesPARA_EIv1.0_2648660.1">
    <property type="protein sequence ID" value="TraesPARA_EIv1.0_2648660.1.CDS1"/>
    <property type="gene ID" value="TraesPARA_EIv1.0_2648660"/>
</dbReference>
<dbReference type="EnsemblPlants" id="TraesPARA_EIv1.0_2649070.1">
    <property type="protein sequence ID" value="TraesPARA_EIv1.0_2649070.1.CDS1"/>
    <property type="gene ID" value="TraesPARA_EIv1.0_2649070"/>
</dbReference>
<dbReference type="EnsemblPlants" id="TraesPARA_EIv1.0_2649520.1">
    <property type="protein sequence ID" value="TraesPARA_EIv1.0_2649520.1.CDS1"/>
    <property type="gene ID" value="TraesPARA_EIv1.0_2649520"/>
</dbReference>
<dbReference type="EnsemblPlants" id="TraesPARA_EIv1.0_2653400.1">
    <property type="protein sequence ID" value="TraesPARA_EIv1.0_2653400.1.CDS1"/>
    <property type="gene ID" value="TraesPARA_EIv1.0_2653400"/>
</dbReference>
<dbReference type="EnsemblPlants" id="TraesPARA_EIv1.0_2666610.1">
    <property type="protein sequence ID" value="TraesPARA_EIv1.0_2666610.1.CDS1"/>
    <property type="gene ID" value="TraesPARA_EIv1.0_2666610"/>
</dbReference>
<dbReference type="EnsemblPlants" id="TraesPARA_EIv1.0_2669220.1">
    <property type="protein sequence ID" value="TraesPARA_EIv1.0_2669220.1.CDS1"/>
    <property type="gene ID" value="TraesPARA_EIv1.0_2669220"/>
</dbReference>
<dbReference type="EnsemblPlants" id="TraesPARA_EIv1.0_2675960.1">
    <property type="protein sequence ID" value="TraesPARA_EIv1.0_2675960.1.CDS1"/>
    <property type="gene ID" value="TraesPARA_EIv1.0_2675960"/>
</dbReference>
<dbReference type="EnsemblPlants" id="TraesPARA_EIv1.0_2676540.1">
    <property type="protein sequence ID" value="TraesPARA_EIv1.0_2676540.1.CDS1"/>
    <property type="gene ID" value="TraesPARA_EIv1.0_2676540"/>
</dbReference>
<dbReference type="EnsemblPlants" id="TraesPARA_EIv1.0_2680070.1">
    <property type="protein sequence ID" value="TraesPARA_EIv1.0_2680070.1.CDS1"/>
    <property type="gene ID" value="TraesPARA_EIv1.0_2680070"/>
</dbReference>
<dbReference type="EnsemblPlants" id="TraesSTA3A03G01341710.1">
    <property type="protein sequence ID" value="TraesSTA3A03G01341710.1.CDS1"/>
    <property type="gene ID" value="TraesSTA3A03G01341710"/>
</dbReference>
<dbReference type="EnsemblPlants" id="TraesSYM3A03G01371640.1">
    <property type="protein sequence ID" value="TraesSYM3A03G01371640.1.CDS1"/>
    <property type="gene ID" value="TraesSYM3A03G01371640"/>
</dbReference>
<dbReference type="GeneID" id="803202"/>
<dbReference type="Gramene" id="TraesJAG3A03G01359460.1">
    <property type="protein sequence ID" value="TraesJAG3A03G01359460.1.CDS1"/>
    <property type="gene ID" value="TraesJAG3A03G01359460"/>
</dbReference>
<dbReference type="Gramene" id="TraesJUL3A03G01361960.1">
    <property type="protein sequence ID" value="TraesJUL3A03G01361960.1.CDS1"/>
    <property type="gene ID" value="TraesJUL3A03G01361960"/>
</dbReference>
<dbReference type="Gramene" id="TraesJUL5D03G03230990.1">
    <property type="protein sequence ID" value="TraesJUL5D03G03230990.1.CDS1"/>
    <property type="gene ID" value="TraesJUL5D03G03230990"/>
</dbReference>
<dbReference type="Gramene" id="TraesKAR2D01G0456760.1">
    <property type="protein sequence ID" value="cds.TraesKAR2D01G0456760.1"/>
    <property type="gene ID" value="TraesKAR2D01G0456760"/>
</dbReference>
<dbReference type="Gramene" id="TraesKAR3A01G0068980.1">
    <property type="protein sequence ID" value="cds.TraesKAR3A01G0068980.1"/>
    <property type="gene ID" value="TraesKAR3A01G0068980"/>
</dbReference>
<dbReference type="Gramene" id="TraesKAR5A01G0338950.1">
    <property type="protein sequence ID" value="cds.TraesKAR5A01G0338950.1"/>
    <property type="gene ID" value="TraesKAR5A01G0338950"/>
</dbReference>
<dbReference type="Gramene" id="TraesKAR6B01G0219640.1">
    <property type="protein sequence ID" value="cds.TraesKAR6B01G0219640.1"/>
    <property type="gene ID" value="TraesKAR6B01G0219640"/>
</dbReference>
<dbReference type="Gramene" id="TraesKAR6B01G0220390.1">
    <property type="protein sequence ID" value="cds.TraesKAR6B01G0220390.1"/>
    <property type="gene ID" value="TraesKAR6B01G0220390"/>
</dbReference>
<dbReference type="Gramene" id="TraesKARUn01G0027100.1">
    <property type="protein sequence ID" value="cds.TraesKARUn01G0027100.1"/>
    <property type="gene ID" value="TraesKARUn01G0027100"/>
</dbReference>
<dbReference type="Gramene" id="TraesKARUn01G0030480.1">
    <property type="protein sequence ID" value="cds.TraesKARUn01G0030480.1"/>
    <property type="gene ID" value="TraesKARUn01G0030480"/>
</dbReference>
<dbReference type="Gramene" id="TraesKARUn01G0030640.1">
    <property type="protein sequence ID" value="cds.TraesKARUn01G0030640.1"/>
    <property type="gene ID" value="TraesKARUn01G0030640"/>
</dbReference>
<dbReference type="Gramene" id="TraesKARUn01G0031460.1">
    <property type="protein sequence ID" value="cds.TraesKARUn01G0031460.1"/>
    <property type="gene ID" value="TraesKARUn01G0031460"/>
</dbReference>
<dbReference type="Gramene" id="TraesKARUn01G0035150.1">
    <property type="protein sequence ID" value="cds.TraesKARUn01G0035150.1"/>
    <property type="gene ID" value="TraesKARUn01G0035150"/>
</dbReference>
<dbReference type="Gramene" id="TraesKARUn01G0062720.1">
    <property type="protein sequence ID" value="cds.TraesKARUn01G0062720.1"/>
    <property type="gene ID" value="TraesKARUn01G0062720"/>
</dbReference>
<dbReference type="Gramene" id="TraesKARUn01G0064460.1">
    <property type="protein sequence ID" value="cds.TraesKARUn01G0064460.1"/>
    <property type="gene ID" value="TraesKARUn01G0064460"/>
</dbReference>
<dbReference type="Gramene" id="TraesKARUn01G0076450.1">
    <property type="protein sequence ID" value="cds.TraesKARUn01G0076450.1"/>
    <property type="gene ID" value="TraesKARUn01G0076450"/>
</dbReference>
<dbReference type="Gramene" id="TraesKARUn01G0082660.1">
    <property type="protein sequence ID" value="cds.TraesKARUn01G0082660.1"/>
    <property type="gene ID" value="TraesKARUn01G0082660"/>
</dbReference>
<dbReference type="Gramene" id="TraesKARUn01G0084700.1">
    <property type="protein sequence ID" value="cds.TraesKARUn01G0084700.1"/>
    <property type="gene ID" value="TraesKARUn01G0084700"/>
</dbReference>
<dbReference type="Gramene" id="TraesKARUn01G0085720.1">
    <property type="protein sequence ID" value="cds.TraesKARUn01G0085720.1"/>
    <property type="gene ID" value="TraesKARUn01G0085720"/>
</dbReference>
<dbReference type="Gramene" id="TraesKARUn01G0086130.1">
    <property type="protein sequence ID" value="cds.TraesKARUn01G0086130.1"/>
    <property type="gene ID" value="TraesKARUn01G0086130"/>
</dbReference>
<dbReference type="Gramene" id="TraesKARUn01G0086980.1">
    <property type="protein sequence ID" value="cds.TraesKARUn01G0086980.1"/>
    <property type="gene ID" value="TraesKARUn01G0086980"/>
</dbReference>
<dbReference type="Gramene" id="TraesKARUn01G0087640.1">
    <property type="protein sequence ID" value="cds.TraesKARUn01G0087640.1"/>
    <property type="gene ID" value="TraesKARUn01G0087640"/>
</dbReference>
<dbReference type="Gramene" id="TraesKARUn01G0089300.1">
    <property type="protein sequence ID" value="cds.TraesKARUn01G0089300.1"/>
    <property type="gene ID" value="TraesKARUn01G0089300"/>
</dbReference>
<dbReference type="Gramene" id="TraesKARUn01G0090330.1">
    <property type="protein sequence ID" value="cds.TraesKARUn01G0090330.1"/>
    <property type="gene ID" value="TraesKARUn01G0090330"/>
</dbReference>
<dbReference type="Gramene" id="TraesKARUn01G0091460.1">
    <property type="protein sequence ID" value="cds.TraesKARUn01G0091460.1"/>
    <property type="gene ID" value="TraesKARUn01G0091460"/>
</dbReference>
<dbReference type="Gramene" id="TraesKARUn01G0096620.1">
    <property type="protein sequence ID" value="cds.TraesKARUn01G0096620.1"/>
    <property type="gene ID" value="TraesKARUn01G0096620"/>
</dbReference>
<dbReference type="Gramene" id="TraesKARUn01G0096700.1">
    <property type="protein sequence ID" value="cds.TraesKARUn01G0096700.1"/>
    <property type="gene ID" value="TraesKARUn01G0096700"/>
</dbReference>
<dbReference type="Gramene" id="TraesKARUn01G0097890.1">
    <property type="protein sequence ID" value="cds.TraesKARUn01G0097890.1"/>
    <property type="gene ID" value="TraesKARUn01G0097890"/>
</dbReference>
<dbReference type="Gramene" id="TraesKARUn01G0098550.1">
    <property type="protein sequence ID" value="cds.TraesKARUn01G0098550.1"/>
    <property type="gene ID" value="TraesKARUn01G0098550"/>
</dbReference>
<dbReference type="Gramene" id="TraesKARUn01G0098810.1">
    <property type="protein sequence ID" value="cds.TraesKARUn01G0098810.1"/>
    <property type="gene ID" value="TraesKARUn01G0098810"/>
</dbReference>
<dbReference type="Gramene" id="TraesKARUn01G0098860.1">
    <property type="protein sequence ID" value="cds.TraesKARUn01G0098860.1"/>
    <property type="gene ID" value="TraesKARUn01G0098860"/>
</dbReference>
<dbReference type="Gramene" id="TraesKARUn01G0102530.1">
    <property type="protein sequence ID" value="cds.TraesKARUn01G0102530.1"/>
    <property type="gene ID" value="TraesKARUn01G0102530"/>
</dbReference>
<dbReference type="Gramene" id="TraesKARUn01G0103940.1">
    <property type="protein sequence ID" value="cds.TraesKARUn01G0103940.1"/>
    <property type="gene ID" value="TraesKARUn01G0103940"/>
</dbReference>
<dbReference type="Gramene" id="TraesKARUn01G0107480.1">
    <property type="protein sequence ID" value="cds.TraesKARUn01G0107480.1"/>
    <property type="gene ID" value="TraesKARUn01G0107480"/>
</dbReference>
<dbReference type="Gramene" id="TraesKARUn01G0109270.1">
    <property type="protein sequence ID" value="cds.TraesKARUn01G0109270.1"/>
    <property type="gene ID" value="TraesKARUn01G0109270"/>
</dbReference>
<dbReference type="Gramene" id="TraesKARUn01G0111230.1">
    <property type="protein sequence ID" value="cds.TraesKARUn01G0111230.1"/>
    <property type="gene ID" value="TraesKARUn01G0111230"/>
</dbReference>
<dbReference type="Gramene" id="TraesKARUn01G0111690.1">
    <property type="protein sequence ID" value="cds.TraesKARUn01G0111690.1"/>
    <property type="gene ID" value="TraesKARUn01G0111690"/>
</dbReference>
<dbReference type="Gramene" id="TraesKARUn01G0112600.1">
    <property type="protein sequence ID" value="cds.TraesKARUn01G0112600.1"/>
    <property type="gene ID" value="TraesKARUn01G0112600"/>
</dbReference>
<dbReference type="Gramene" id="TraesKARUn01G0113860.1">
    <property type="protein sequence ID" value="cds.TraesKARUn01G0113860.1"/>
    <property type="gene ID" value="TraesKARUn01G0113860"/>
</dbReference>
<dbReference type="Gramene" id="TraesKARUn01G0114420.1">
    <property type="protein sequence ID" value="cds.TraesKARUn01G0114420.1"/>
    <property type="gene ID" value="TraesKARUn01G0114420"/>
</dbReference>
<dbReference type="Gramene" id="TraesKARUn01G0119930.1">
    <property type="protein sequence ID" value="cds.TraesKARUn01G0119930.1"/>
    <property type="gene ID" value="TraesKARUn01G0119930"/>
</dbReference>
<dbReference type="Gramene" id="TraesKARUn01G0120650.1">
    <property type="protein sequence ID" value="cds.TraesKARUn01G0120650.1"/>
    <property type="gene ID" value="TraesKARUn01G0120650"/>
</dbReference>
<dbReference type="Gramene" id="TraesKARUn01G0120860.1">
    <property type="protein sequence ID" value="cds.TraesKARUn01G0120860.1"/>
    <property type="gene ID" value="TraesKARUn01G0120860"/>
</dbReference>
<dbReference type="Gramene" id="TraesKARUn01G0121760.1">
    <property type="protein sequence ID" value="cds.TraesKARUn01G0121760.1"/>
    <property type="gene ID" value="TraesKARUn01G0121760"/>
</dbReference>
<dbReference type="Gramene" id="TraesKARUn01G0122870.1">
    <property type="protein sequence ID" value="cds.TraesKARUn01G0122870.1"/>
    <property type="gene ID" value="TraesKARUn01G0122870"/>
</dbReference>
<dbReference type="Gramene" id="TraesKARUn01G0125550.1">
    <property type="protein sequence ID" value="cds.TraesKARUn01G0125550.1"/>
    <property type="gene ID" value="TraesKARUn01G0125550"/>
</dbReference>
<dbReference type="Gramene" id="TraesKARUn01G0129780.1">
    <property type="protein sequence ID" value="cds.TraesKARUn01G0129780.1"/>
    <property type="gene ID" value="TraesKARUn01G0129780"/>
</dbReference>
<dbReference type="Gramene" id="TraesKARUn01G0129960.1">
    <property type="protein sequence ID" value="cds.TraesKARUn01G0129960.1"/>
    <property type="gene ID" value="TraesKARUn01G0129960"/>
</dbReference>
<dbReference type="Gramene" id="TraesKARUn01G0130160.1">
    <property type="protein sequence ID" value="cds.TraesKARUn01G0130160.1"/>
    <property type="gene ID" value="TraesKARUn01G0130160"/>
</dbReference>
<dbReference type="Gramene" id="TraesKARUn01G0131590.1">
    <property type="protein sequence ID" value="cds.TraesKARUn01G0131590.1"/>
    <property type="gene ID" value="TraesKARUn01G0131590"/>
</dbReference>
<dbReference type="Gramene" id="TraesKARUn01G0132330.1">
    <property type="protein sequence ID" value="cds.TraesKARUn01G0132330.1"/>
    <property type="gene ID" value="TraesKARUn01G0132330"/>
</dbReference>
<dbReference type="Gramene" id="TraesKARUn01G0132550.1">
    <property type="protein sequence ID" value="cds.TraesKARUn01G0132550.1"/>
    <property type="gene ID" value="TraesKARUn01G0132550"/>
</dbReference>
<dbReference type="Gramene" id="TraesKARUn01G0138220.1">
    <property type="protein sequence ID" value="cds.TraesKARUn01G0138220.1"/>
    <property type="gene ID" value="TraesKARUn01G0138220"/>
</dbReference>
<dbReference type="Gramene" id="TraesKARUn01G0147990.1">
    <property type="protein sequence ID" value="cds.TraesKARUn01G0147990.1"/>
    <property type="gene ID" value="TraesKARUn01G0147990"/>
</dbReference>
<dbReference type="Gramene" id="TraesKARUn01G0148090.1">
    <property type="protein sequence ID" value="cds.TraesKARUn01G0148090.1"/>
    <property type="gene ID" value="TraesKARUn01G0148090"/>
</dbReference>
<dbReference type="Gramene" id="TraesKARUn01G0163370.1">
    <property type="protein sequence ID" value="cds.TraesKARUn01G0163370.1"/>
    <property type="gene ID" value="TraesKARUn01G0163370"/>
</dbReference>
<dbReference type="Gramene" id="TraesKARUn01G0164730.1">
    <property type="protein sequence ID" value="cds.TraesKARUn01G0164730.1"/>
    <property type="gene ID" value="TraesKARUn01G0164730"/>
</dbReference>
<dbReference type="Gramene" id="TraesKARUn01G0165130.1">
    <property type="protein sequence ID" value="cds.TraesKARUn01G0165130.1"/>
    <property type="gene ID" value="TraesKARUn01G0165130"/>
</dbReference>
<dbReference type="Gramene" id="TraesKARUn01G0170850.1">
    <property type="protein sequence ID" value="cds.TraesKARUn01G0170850.1"/>
    <property type="gene ID" value="TraesKARUn01G0170850"/>
</dbReference>
<dbReference type="Gramene" id="TraesKARUn01G0171190.1">
    <property type="protein sequence ID" value="cds.TraesKARUn01G0171190.1"/>
    <property type="gene ID" value="TraesKARUn01G0171190"/>
</dbReference>
<dbReference type="Gramene" id="TraesKARUn01G0171540.1">
    <property type="protein sequence ID" value="cds.TraesKARUn01G0171540.1"/>
    <property type="gene ID" value="TraesKARUn01G0171540"/>
</dbReference>
<dbReference type="Gramene" id="TraesKARUn01G0171990.1">
    <property type="protein sequence ID" value="cds.TraesKARUn01G0171990.1"/>
    <property type="gene ID" value="TraesKARUn01G0171990"/>
</dbReference>
<dbReference type="Gramene" id="TraesKARUn01G0177320.1">
    <property type="protein sequence ID" value="cds.TraesKARUn01G0177320.1"/>
    <property type="gene ID" value="TraesKARUn01G0177320"/>
</dbReference>
<dbReference type="Gramene" id="TraesKARUn01G0177550.1">
    <property type="protein sequence ID" value="cds.TraesKARUn01G0177550.1"/>
    <property type="gene ID" value="TraesKARUn01G0177550"/>
</dbReference>
<dbReference type="Gramene" id="TraesKARUn01G0179280.1">
    <property type="protein sequence ID" value="cds.TraesKARUn01G0179280.1"/>
    <property type="gene ID" value="TraesKARUn01G0179280"/>
</dbReference>
<dbReference type="Gramene" id="TraesKARUn01G0179400.1">
    <property type="protein sequence ID" value="cds.TraesKARUn01G0179400.1"/>
    <property type="gene ID" value="TraesKARUn01G0179400"/>
</dbReference>
<dbReference type="Gramene" id="TraesKARUn01G0190130.1">
    <property type="protein sequence ID" value="cds.TraesKARUn01G0190130.1"/>
    <property type="gene ID" value="TraesKARUn01G0190130"/>
</dbReference>
<dbReference type="Gramene" id="TraesLDM3A03G01352780.1">
    <property type="protein sequence ID" value="TraesLDM3A03G01352780.1.CDS1"/>
    <property type="gene ID" value="TraesLDM3A03G01352780"/>
</dbReference>
<dbReference type="Gramene" id="TraesPARA_EIv1.0_0757360.1">
    <property type="protein sequence ID" value="TraesPARA_EIv1.0_0757360.1.CDS1"/>
    <property type="gene ID" value="TraesPARA_EIv1.0_0757360"/>
</dbReference>
<dbReference type="Gramene" id="TraesPARA_EIv1.0_1544800.1">
    <property type="protein sequence ID" value="TraesPARA_EIv1.0_1544800.1.CDS1"/>
    <property type="gene ID" value="TraesPARA_EIv1.0_1544800"/>
</dbReference>
<dbReference type="Gramene" id="TraesPARA_EIv1.0_2014480.1">
    <property type="protein sequence ID" value="TraesPARA_EIv1.0_2014480.1.CDS1"/>
    <property type="gene ID" value="TraesPARA_EIv1.0_2014480"/>
</dbReference>
<dbReference type="Gramene" id="TraesPARA_EIv1.0_2646050.1">
    <property type="protein sequence ID" value="TraesPARA_EIv1.0_2646050.1.CDS1"/>
    <property type="gene ID" value="TraesPARA_EIv1.0_2646050"/>
</dbReference>
<dbReference type="Gramene" id="TraesPARA_EIv1.0_2648350.1">
    <property type="protein sequence ID" value="TraesPARA_EIv1.0_2648350.1.CDS1"/>
    <property type="gene ID" value="TraesPARA_EIv1.0_2648350"/>
</dbReference>
<dbReference type="Gramene" id="TraesPARA_EIv1.0_2648660.1">
    <property type="protein sequence ID" value="TraesPARA_EIv1.0_2648660.1.CDS1"/>
    <property type="gene ID" value="TraesPARA_EIv1.0_2648660"/>
</dbReference>
<dbReference type="Gramene" id="TraesPARA_EIv1.0_2649070.1">
    <property type="protein sequence ID" value="TraesPARA_EIv1.0_2649070.1.CDS1"/>
    <property type="gene ID" value="TraesPARA_EIv1.0_2649070"/>
</dbReference>
<dbReference type="Gramene" id="TraesPARA_EIv1.0_2649520.1">
    <property type="protein sequence ID" value="TraesPARA_EIv1.0_2649520.1.CDS1"/>
    <property type="gene ID" value="TraesPARA_EIv1.0_2649520"/>
</dbReference>
<dbReference type="Gramene" id="TraesPARA_EIv1.0_2653400.1">
    <property type="protein sequence ID" value="TraesPARA_EIv1.0_2653400.1.CDS1"/>
    <property type="gene ID" value="TraesPARA_EIv1.0_2653400"/>
</dbReference>
<dbReference type="Gramene" id="TraesPARA_EIv1.0_2666610.1">
    <property type="protein sequence ID" value="TraesPARA_EIv1.0_2666610.1.CDS1"/>
    <property type="gene ID" value="TraesPARA_EIv1.0_2666610"/>
</dbReference>
<dbReference type="Gramene" id="TraesPARA_EIv1.0_2669220.1">
    <property type="protein sequence ID" value="TraesPARA_EIv1.0_2669220.1.CDS1"/>
    <property type="gene ID" value="TraesPARA_EIv1.0_2669220"/>
</dbReference>
<dbReference type="Gramene" id="TraesPARA_EIv1.0_2675960.1">
    <property type="protein sequence ID" value="TraesPARA_EIv1.0_2675960.1.CDS1"/>
    <property type="gene ID" value="TraesPARA_EIv1.0_2675960"/>
</dbReference>
<dbReference type="Gramene" id="TraesPARA_EIv1.0_2676540.1">
    <property type="protein sequence ID" value="TraesPARA_EIv1.0_2676540.1.CDS1"/>
    <property type="gene ID" value="TraesPARA_EIv1.0_2676540"/>
</dbReference>
<dbReference type="Gramene" id="TraesPARA_EIv1.0_2680070.1">
    <property type="protein sequence ID" value="TraesPARA_EIv1.0_2680070.1.CDS1"/>
    <property type="gene ID" value="TraesPARA_EIv1.0_2680070"/>
</dbReference>
<dbReference type="Gramene" id="TraesSTA3A03G01341710.1">
    <property type="protein sequence ID" value="TraesSTA3A03G01341710.1.CDS1"/>
    <property type="gene ID" value="TraesSTA3A03G01341710"/>
</dbReference>
<dbReference type="Gramene" id="TraesSYM3A03G01371640.1">
    <property type="protein sequence ID" value="TraesSYM3A03G01371640.1.CDS1"/>
    <property type="gene ID" value="TraesSYM3A03G01371640"/>
</dbReference>
<dbReference type="KEGG" id="taes:803202"/>
<dbReference type="eggNOG" id="KOG0832">
    <property type="taxonomic scope" value="Eukaryota"/>
</dbReference>
<dbReference type="HOGENOM" id="CLU_040318_1_2_1"/>
<dbReference type="OrthoDB" id="773813at2759"/>
<dbReference type="Proteomes" id="UP000019116">
    <property type="component" value="Chloroplast"/>
</dbReference>
<dbReference type="GO" id="GO:0009507">
    <property type="term" value="C:chloroplast"/>
    <property type="evidence" value="ECO:0007669"/>
    <property type="project" value="UniProtKB-SubCell"/>
</dbReference>
<dbReference type="GO" id="GO:0005763">
    <property type="term" value="C:mitochondrial small ribosomal subunit"/>
    <property type="evidence" value="ECO:0000318"/>
    <property type="project" value="GO_Central"/>
</dbReference>
<dbReference type="GO" id="GO:0003735">
    <property type="term" value="F:structural constituent of ribosome"/>
    <property type="evidence" value="ECO:0000318"/>
    <property type="project" value="GO_Central"/>
</dbReference>
<dbReference type="GO" id="GO:0006412">
    <property type="term" value="P:translation"/>
    <property type="evidence" value="ECO:0007669"/>
    <property type="project" value="UniProtKB-UniRule"/>
</dbReference>
<dbReference type="CDD" id="cd01425">
    <property type="entry name" value="RPS2"/>
    <property type="match status" value="1"/>
</dbReference>
<dbReference type="FunFam" id="1.10.287.610:FF:000001">
    <property type="entry name" value="30S ribosomal protein S2"/>
    <property type="match status" value="1"/>
</dbReference>
<dbReference type="Gene3D" id="3.40.50.10490">
    <property type="entry name" value="Glucose-6-phosphate isomerase like protein, domain 1"/>
    <property type="match status" value="1"/>
</dbReference>
<dbReference type="Gene3D" id="1.10.287.610">
    <property type="entry name" value="Helix hairpin bin"/>
    <property type="match status" value="1"/>
</dbReference>
<dbReference type="HAMAP" id="MF_00291_B">
    <property type="entry name" value="Ribosomal_uS2_B"/>
    <property type="match status" value="1"/>
</dbReference>
<dbReference type="InterPro" id="IPR001865">
    <property type="entry name" value="Ribosomal_uS2"/>
</dbReference>
<dbReference type="InterPro" id="IPR005706">
    <property type="entry name" value="Ribosomal_uS2_bac/mit/plastid"/>
</dbReference>
<dbReference type="InterPro" id="IPR018130">
    <property type="entry name" value="Ribosomal_uS2_CS"/>
</dbReference>
<dbReference type="InterPro" id="IPR023591">
    <property type="entry name" value="Ribosomal_uS2_flav_dom_sf"/>
</dbReference>
<dbReference type="NCBIfam" id="TIGR01011">
    <property type="entry name" value="rpsB_bact"/>
    <property type="match status" value="1"/>
</dbReference>
<dbReference type="PANTHER" id="PTHR12534">
    <property type="entry name" value="30S RIBOSOMAL PROTEIN S2 PROKARYOTIC AND ORGANELLAR"/>
    <property type="match status" value="1"/>
</dbReference>
<dbReference type="PANTHER" id="PTHR12534:SF0">
    <property type="entry name" value="SMALL RIBOSOMAL SUBUNIT PROTEIN US2M"/>
    <property type="match status" value="1"/>
</dbReference>
<dbReference type="Pfam" id="PF00318">
    <property type="entry name" value="Ribosomal_S2"/>
    <property type="match status" value="1"/>
</dbReference>
<dbReference type="PRINTS" id="PR00395">
    <property type="entry name" value="RIBOSOMALS2"/>
</dbReference>
<dbReference type="SUPFAM" id="SSF52313">
    <property type="entry name" value="Ribosomal protein S2"/>
    <property type="match status" value="1"/>
</dbReference>
<dbReference type="PROSITE" id="PS00962">
    <property type="entry name" value="RIBOSOMAL_S2_1"/>
    <property type="match status" value="1"/>
</dbReference>
<dbReference type="PROSITE" id="PS00963">
    <property type="entry name" value="RIBOSOMAL_S2_2"/>
    <property type="match status" value="1"/>
</dbReference>
<name>RR2_WHEAT</name>
<proteinExistence type="inferred from homology"/>
<evidence type="ECO:0000305" key="1"/>